<protein>
    <recommendedName>
        <fullName evidence="1">Glycine--tRNA ligase beta subunit</fullName>
        <ecNumber evidence="1">6.1.1.14</ecNumber>
    </recommendedName>
    <alternativeName>
        <fullName evidence="1">Glycyl-tRNA synthetase beta subunit</fullName>
        <shortName evidence="1">GlyRS</shortName>
    </alternativeName>
</protein>
<feature type="chain" id="PRO_1000101280" description="Glycine--tRNA ligase beta subunit">
    <location>
        <begin position="1"/>
        <end position="689"/>
    </location>
</feature>
<keyword id="KW-0030">Aminoacyl-tRNA synthetase</keyword>
<keyword id="KW-0067">ATP-binding</keyword>
<keyword id="KW-0963">Cytoplasm</keyword>
<keyword id="KW-0436">Ligase</keyword>
<keyword id="KW-0547">Nucleotide-binding</keyword>
<keyword id="KW-0648">Protein biosynthesis</keyword>
<keyword id="KW-1185">Reference proteome</keyword>
<evidence type="ECO:0000255" key="1">
    <source>
        <dbReference type="HAMAP-Rule" id="MF_00255"/>
    </source>
</evidence>
<accession>B2VCH1</accession>
<reference key="1">
    <citation type="journal article" date="2008" name="Environ. Microbiol.">
        <title>The genome of Erwinia tasmaniensis strain Et1/99, a non-pathogenic bacterium in the genus Erwinia.</title>
        <authorList>
            <person name="Kube M."/>
            <person name="Migdoll A.M."/>
            <person name="Mueller I."/>
            <person name="Kuhl H."/>
            <person name="Beck A."/>
            <person name="Reinhardt R."/>
            <person name="Geider K."/>
        </authorList>
    </citation>
    <scope>NUCLEOTIDE SEQUENCE [LARGE SCALE GENOMIC DNA]</scope>
    <source>
        <strain>DSM 17950 / CFBP 7177 / CIP 109463 / NCPPB 4357 / Et1/99</strain>
    </source>
</reference>
<proteinExistence type="inferred from homology"/>
<organism>
    <name type="scientific">Erwinia tasmaniensis (strain DSM 17950 / CFBP 7177 / CIP 109463 / NCPPB 4357 / Et1/99)</name>
    <dbReference type="NCBI Taxonomy" id="465817"/>
    <lineage>
        <taxon>Bacteria</taxon>
        <taxon>Pseudomonadati</taxon>
        <taxon>Pseudomonadota</taxon>
        <taxon>Gammaproteobacteria</taxon>
        <taxon>Enterobacterales</taxon>
        <taxon>Erwiniaceae</taxon>
        <taxon>Erwinia</taxon>
    </lineage>
</organism>
<dbReference type="EC" id="6.1.1.14" evidence="1"/>
<dbReference type="EMBL" id="CU468135">
    <property type="protein sequence ID" value="CAO98459.1"/>
    <property type="molecule type" value="Genomic_DNA"/>
</dbReference>
<dbReference type="RefSeq" id="WP_012443082.1">
    <property type="nucleotide sequence ID" value="NC_010694.1"/>
</dbReference>
<dbReference type="SMR" id="B2VCH1"/>
<dbReference type="STRING" id="465817.ETA_34130"/>
<dbReference type="KEGG" id="eta:ETA_34130"/>
<dbReference type="eggNOG" id="COG0751">
    <property type="taxonomic scope" value="Bacteria"/>
</dbReference>
<dbReference type="HOGENOM" id="CLU_007220_2_2_6"/>
<dbReference type="OrthoDB" id="9775440at2"/>
<dbReference type="Proteomes" id="UP000001726">
    <property type="component" value="Chromosome"/>
</dbReference>
<dbReference type="GO" id="GO:0005829">
    <property type="term" value="C:cytosol"/>
    <property type="evidence" value="ECO:0007669"/>
    <property type="project" value="TreeGrafter"/>
</dbReference>
<dbReference type="GO" id="GO:0004814">
    <property type="term" value="F:arginine-tRNA ligase activity"/>
    <property type="evidence" value="ECO:0007669"/>
    <property type="project" value="InterPro"/>
</dbReference>
<dbReference type="GO" id="GO:0005524">
    <property type="term" value="F:ATP binding"/>
    <property type="evidence" value="ECO:0007669"/>
    <property type="project" value="UniProtKB-UniRule"/>
</dbReference>
<dbReference type="GO" id="GO:0004820">
    <property type="term" value="F:glycine-tRNA ligase activity"/>
    <property type="evidence" value="ECO:0007669"/>
    <property type="project" value="UniProtKB-UniRule"/>
</dbReference>
<dbReference type="GO" id="GO:0006420">
    <property type="term" value="P:arginyl-tRNA aminoacylation"/>
    <property type="evidence" value="ECO:0007669"/>
    <property type="project" value="InterPro"/>
</dbReference>
<dbReference type="GO" id="GO:0006426">
    <property type="term" value="P:glycyl-tRNA aminoacylation"/>
    <property type="evidence" value="ECO:0007669"/>
    <property type="project" value="UniProtKB-UniRule"/>
</dbReference>
<dbReference type="HAMAP" id="MF_00255">
    <property type="entry name" value="Gly_tRNA_synth_beta"/>
    <property type="match status" value="1"/>
</dbReference>
<dbReference type="InterPro" id="IPR008909">
    <property type="entry name" value="DALR_anticod-bd"/>
</dbReference>
<dbReference type="InterPro" id="IPR015944">
    <property type="entry name" value="Gly-tRNA-synth_bsu"/>
</dbReference>
<dbReference type="InterPro" id="IPR006194">
    <property type="entry name" value="Gly-tRNA-synth_heterodimer"/>
</dbReference>
<dbReference type="NCBIfam" id="TIGR00211">
    <property type="entry name" value="glyS"/>
    <property type="match status" value="1"/>
</dbReference>
<dbReference type="PANTHER" id="PTHR30075:SF2">
    <property type="entry name" value="GLYCINE--TRNA LIGASE, CHLOROPLASTIC_MITOCHONDRIAL 2"/>
    <property type="match status" value="1"/>
</dbReference>
<dbReference type="PANTHER" id="PTHR30075">
    <property type="entry name" value="GLYCYL-TRNA SYNTHETASE"/>
    <property type="match status" value="1"/>
</dbReference>
<dbReference type="Pfam" id="PF05746">
    <property type="entry name" value="DALR_1"/>
    <property type="match status" value="1"/>
</dbReference>
<dbReference type="Pfam" id="PF02092">
    <property type="entry name" value="tRNA_synt_2f"/>
    <property type="match status" value="1"/>
</dbReference>
<dbReference type="PRINTS" id="PR01045">
    <property type="entry name" value="TRNASYNTHGB"/>
</dbReference>
<dbReference type="SUPFAM" id="SSF109604">
    <property type="entry name" value="HD-domain/PDEase-like"/>
    <property type="match status" value="1"/>
</dbReference>
<dbReference type="PROSITE" id="PS50861">
    <property type="entry name" value="AA_TRNA_LIGASE_II_GLYAB"/>
    <property type="match status" value="1"/>
</dbReference>
<sequence length="689" mass="76032">MTDKTFLVEIGTEELPPKALRSLAESFAANLTAELDAAGLAHGEVSWFAAPRRLALKVANLSAAQPDREVEKRGPAIQAAFDANGVATKAAEGWARGCGITVDQAERLSTDKGEWLMYRARVTGERTQVLLPAMIATSLAKLPIPKLMRWGASEVQFVRPVHTVTLLLGDELIPANILGIDSARIIRGHRFMGEPEFTIDHADQYPQILLERGKVQADYAARKAIIKADAEAAAAKIGGVADLSDSLLEEVTSLVEWPVVLTATFEEKFLAVPAEALVYTMKGDQKYFPVYDKAGKLLPNFIFVTNIESKDPQQIISGNEKVVRPRLADAEFFFNSDRKRRLEDNLPRLETVLFQKELGTLRAKTDRIQALAGWVAAQIGADVNHATRAGLLSKCDLMTNMVFEFTDTQGVMGMHYARHDGEAEDVAVALNEQYQPRFAGDELPSNPVACALAIADKMDTLAGIFGIGQHPKGDKDPFALRRAALGVLRIIVEKNLPLDLQTLTEEAVRLYGSKLSNAKAVDEVVDFMLGRFRTWYQEEGHSVDTLQAVLARRPTRPADFDARMKAVSHFRTLEQAASLAAANKRVSNILAKATEPLNDSVQASLLKENEEIKLATYVTALSSKLQPFFAEGRYQDALIELAQLREAVDNFFDKVMVNAEEKEVRINRLTLLAKLRELFLQVADISLLQ</sequence>
<gene>
    <name evidence="1" type="primary">glyS</name>
    <name type="ordered locus">ETA_34130</name>
</gene>
<comment type="catalytic activity">
    <reaction evidence="1">
        <text>tRNA(Gly) + glycine + ATP = glycyl-tRNA(Gly) + AMP + diphosphate</text>
        <dbReference type="Rhea" id="RHEA:16013"/>
        <dbReference type="Rhea" id="RHEA-COMP:9664"/>
        <dbReference type="Rhea" id="RHEA-COMP:9683"/>
        <dbReference type="ChEBI" id="CHEBI:30616"/>
        <dbReference type="ChEBI" id="CHEBI:33019"/>
        <dbReference type="ChEBI" id="CHEBI:57305"/>
        <dbReference type="ChEBI" id="CHEBI:78442"/>
        <dbReference type="ChEBI" id="CHEBI:78522"/>
        <dbReference type="ChEBI" id="CHEBI:456215"/>
        <dbReference type="EC" id="6.1.1.14"/>
    </reaction>
</comment>
<comment type="subunit">
    <text evidence="1">Tetramer of two alpha and two beta subunits.</text>
</comment>
<comment type="subcellular location">
    <subcellularLocation>
        <location evidence="1">Cytoplasm</location>
    </subcellularLocation>
</comment>
<comment type="similarity">
    <text evidence="1">Belongs to the class-II aminoacyl-tRNA synthetase family.</text>
</comment>
<name>SYGB_ERWT9</name>